<protein>
    <recommendedName>
        <fullName evidence="5">Sperm annulus positionning complex subunit Chibby3</fullName>
    </recommendedName>
</protein>
<keyword id="KW-0966">Cell projection</keyword>
<keyword id="KW-0969">Cilium</keyword>
<keyword id="KW-0221">Differentiation</keyword>
<keyword id="KW-0282">Flagellum</keyword>
<keyword id="KW-1267">Proteomics identification</keyword>
<keyword id="KW-1185">Reference proteome</keyword>
<keyword id="KW-0744">Spermatogenesis</keyword>
<accession>A6NI87</accession>
<proteinExistence type="evidence at protein level"/>
<evidence type="ECO:0000250" key="1">
    <source>
        <dbReference type="UniProtKB" id="Q9CVN6"/>
    </source>
</evidence>
<evidence type="ECO:0000250" key="2">
    <source>
        <dbReference type="UniProtKB" id="Q9Y3M2"/>
    </source>
</evidence>
<evidence type="ECO:0000256" key="3">
    <source>
        <dbReference type="SAM" id="MobiDB-lite"/>
    </source>
</evidence>
<evidence type="ECO:0000269" key="4">
    <source>
    </source>
</evidence>
<evidence type="ECO:0000303" key="5">
    <source>
    </source>
</evidence>
<evidence type="ECO:0000305" key="6"/>
<feature type="chain" id="PRO_0000340100" description="Sperm annulus positionning complex subunit Chibby3">
    <location>
        <begin position="1"/>
        <end position="242"/>
    </location>
</feature>
<feature type="region of interest" description="Disordered" evidence="3">
    <location>
        <begin position="1"/>
        <end position="49"/>
    </location>
</feature>
<feature type="region of interest" description="Leucine-zipper; mediates homodimerization" evidence="2">
    <location>
        <begin position="172"/>
        <end position="186"/>
    </location>
</feature>
<feature type="compositionally biased region" description="Basic and acidic residues" evidence="3">
    <location>
        <begin position="1"/>
        <end position="10"/>
    </location>
</feature>
<feature type="mutagenesis site" description="Reduced interaction with CIBAR1." evidence="4">
    <original>S</original>
    <variation>A</variation>
    <location>
        <position position="102"/>
    </location>
</feature>
<feature type="mutagenesis site" description="Reduced interaction with CIBAR1." evidence="4">
    <original>G</original>
    <variation>A</variation>
    <location>
        <position position="117"/>
    </location>
</feature>
<dbReference type="EMBL" id="AC136604">
    <property type="status" value="NOT_ANNOTATED_CDS"/>
    <property type="molecule type" value="Genomic_DNA"/>
</dbReference>
<dbReference type="CCDS" id="CCDS47354.1"/>
<dbReference type="RefSeq" id="NP_001157916.1">
    <property type="nucleotide sequence ID" value="NM_001164444.2"/>
</dbReference>
<dbReference type="STRING" id="9606.ENSP00000366173"/>
<dbReference type="iPTMnet" id="A6NI87"/>
<dbReference type="PhosphoSitePlus" id="A6NI87"/>
<dbReference type="BioMuta" id="CBY3"/>
<dbReference type="MassIVE" id="A6NI87"/>
<dbReference type="PaxDb" id="9606-ENSP00000366173"/>
<dbReference type="PeptideAtlas" id="A6NI87"/>
<dbReference type="ProteomicsDB" id="1257"/>
<dbReference type="Antibodypedia" id="59234">
    <property type="antibodies" value="10 antibodies from 8 providers"/>
</dbReference>
<dbReference type="DNASU" id="646019"/>
<dbReference type="Ensembl" id="ENST00000376974.5">
    <property type="protein sequence ID" value="ENSP00000366173.4"/>
    <property type="gene ID" value="ENSG00000204659.5"/>
</dbReference>
<dbReference type="Ensembl" id="ENST00000639980.2">
    <property type="protein sequence ID" value="ENSP00000491827.1"/>
    <property type="gene ID" value="ENSG00000283718.2"/>
</dbReference>
<dbReference type="GeneID" id="646019"/>
<dbReference type="KEGG" id="hsa:646019"/>
<dbReference type="MANE-Select" id="ENST00000376974.5">
    <property type="protein sequence ID" value="ENSP00000366173.4"/>
    <property type="RefSeq nucleotide sequence ID" value="NM_001164444.2"/>
    <property type="RefSeq protein sequence ID" value="NP_001157916.1"/>
</dbReference>
<dbReference type="UCSC" id="uc021yjf.2">
    <property type="organism name" value="human"/>
</dbReference>
<dbReference type="AGR" id="HGNC:33278"/>
<dbReference type="CTD" id="646019"/>
<dbReference type="GeneCards" id="CBY3"/>
<dbReference type="HGNC" id="HGNC:33278">
    <property type="gene designation" value="CBY3"/>
</dbReference>
<dbReference type="HPA" id="ENSG00000204659">
    <property type="expression patterns" value="Tissue enriched (testis)"/>
</dbReference>
<dbReference type="MIM" id="620892">
    <property type="type" value="gene"/>
</dbReference>
<dbReference type="neXtProt" id="NX_A6NI87"/>
<dbReference type="PharmGKB" id="PA162381185"/>
<dbReference type="VEuPathDB" id="HostDB:ENSG00000204659"/>
<dbReference type="eggNOG" id="KOG4119">
    <property type="taxonomic scope" value="Eukaryota"/>
</dbReference>
<dbReference type="GeneTree" id="ENSGT00940000153137"/>
<dbReference type="HOGENOM" id="CLU_1227257_0_0_1"/>
<dbReference type="InParanoid" id="A6NI87"/>
<dbReference type="OMA" id="LMIEPRA"/>
<dbReference type="OrthoDB" id="2145765at2759"/>
<dbReference type="PAN-GO" id="A6NI87">
    <property type="GO annotations" value="0 GO annotations based on evolutionary models"/>
</dbReference>
<dbReference type="PhylomeDB" id="A6NI87"/>
<dbReference type="TreeFam" id="TF324419"/>
<dbReference type="PathwayCommons" id="A6NI87"/>
<dbReference type="SignaLink" id="A6NI87"/>
<dbReference type="BioGRID-ORCS" id="646019">
    <property type="hits" value="8 hits in 1138 CRISPR screens"/>
</dbReference>
<dbReference type="GenomeRNAi" id="646019"/>
<dbReference type="Pharos" id="A6NI87">
    <property type="development level" value="Tdark"/>
</dbReference>
<dbReference type="PRO" id="PR:A6NI87"/>
<dbReference type="Proteomes" id="UP000005640">
    <property type="component" value="Chromosome 5"/>
</dbReference>
<dbReference type="RNAct" id="A6NI87">
    <property type="molecule type" value="protein"/>
</dbReference>
<dbReference type="Bgee" id="ENSG00000204659">
    <property type="expression patterns" value="Expressed in male germ line stem cell (sensu Vertebrata) in testis and 90 other cell types or tissues"/>
</dbReference>
<dbReference type="GO" id="GO:0097227">
    <property type="term" value="C:sperm annulus"/>
    <property type="evidence" value="ECO:0000250"/>
    <property type="project" value="UniProtKB"/>
</dbReference>
<dbReference type="GO" id="GO:0007283">
    <property type="term" value="P:spermatogenesis"/>
    <property type="evidence" value="ECO:0000250"/>
    <property type="project" value="UniProtKB"/>
</dbReference>
<dbReference type="CDD" id="cd07429">
    <property type="entry name" value="Cby_like"/>
    <property type="match status" value="1"/>
</dbReference>
<dbReference type="InterPro" id="IPR028118">
    <property type="entry name" value="Chibby_fam"/>
</dbReference>
<dbReference type="PANTHER" id="PTHR21533">
    <property type="entry name" value="LEUCINE-RICH PROTEIN"/>
    <property type="match status" value="1"/>
</dbReference>
<dbReference type="PANTHER" id="PTHR21533:SF17">
    <property type="entry name" value="PROTEIN CHIBBY HOMOLOG 3"/>
    <property type="match status" value="1"/>
</dbReference>
<dbReference type="Pfam" id="PF14645">
    <property type="entry name" value="Chibby"/>
    <property type="match status" value="1"/>
</dbReference>
<name>CBY3_HUMAN</name>
<reference key="1">
    <citation type="journal article" date="2004" name="Nature">
        <title>The DNA sequence and comparative analysis of human chromosome 5.</title>
        <authorList>
            <person name="Schmutz J."/>
            <person name="Martin J."/>
            <person name="Terry A."/>
            <person name="Couronne O."/>
            <person name="Grimwood J."/>
            <person name="Lowry S."/>
            <person name="Gordon L.A."/>
            <person name="Scott D."/>
            <person name="Xie G."/>
            <person name="Huang W."/>
            <person name="Hellsten U."/>
            <person name="Tran-Gyamfi M."/>
            <person name="She X."/>
            <person name="Prabhakar S."/>
            <person name="Aerts A."/>
            <person name="Altherr M."/>
            <person name="Bajorek E."/>
            <person name="Black S."/>
            <person name="Branscomb E."/>
            <person name="Caoile C."/>
            <person name="Challacombe J.F."/>
            <person name="Chan Y.M."/>
            <person name="Denys M."/>
            <person name="Detter J.C."/>
            <person name="Escobar J."/>
            <person name="Flowers D."/>
            <person name="Fotopulos D."/>
            <person name="Glavina T."/>
            <person name="Gomez M."/>
            <person name="Gonzales E."/>
            <person name="Goodstein D."/>
            <person name="Grigoriev I."/>
            <person name="Groza M."/>
            <person name="Hammon N."/>
            <person name="Hawkins T."/>
            <person name="Haydu L."/>
            <person name="Israni S."/>
            <person name="Jett J."/>
            <person name="Kadner K."/>
            <person name="Kimball H."/>
            <person name="Kobayashi A."/>
            <person name="Lopez F."/>
            <person name="Lou Y."/>
            <person name="Martinez D."/>
            <person name="Medina C."/>
            <person name="Morgan J."/>
            <person name="Nandkeshwar R."/>
            <person name="Noonan J.P."/>
            <person name="Pitluck S."/>
            <person name="Pollard M."/>
            <person name="Predki P."/>
            <person name="Priest J."/>
            <person name="Ramirez L."/>
            <person name="Retterer J."/>
            <person name="Rodriguez A."/>
            <person name="Rogers S."/>
            <person name="Salamov A."/>
            <person name="Salazar A."/>
            <person name="Thayer N."/>
            <person name="Tice H."/>
            <person name="Tsai M."/>
            <person name="Ustaszewska A."/>
            <person name="Vo N."/>
            <person name="Wheeler J."/>
            <person name="Wu K."/>
            <person name="Yang J."/>
            <person name="Dickson M."/>
            <person name="Cheng J.-F."/>
            <person name="Eichler E.E."/>
            <person name="Olsen A."/>
            <person name="Pennacchio L.A."/>
            <person name="Rokhsar D.S."/>
            <person name="Richardson P."/>
            <person name="Lucas S.M."/>
            <person name="Myers R.M."/>
            <person name="Rubin E.M."/>
        </authorList>
    </citation>
    <scope>NUCLEOTIDE SEQUENCE [LARGE SCALE GENOMIC DNA]</scope>
</reference>
<reference key="2">
    <citation type="journal article" date="2024" name="J. Cell Biol.">
        <title>The Cby3/ciBAR1 complex positions the annulus along the sperm flagellum during spermiogenesis.</title>
        <authorList>
            <person name="Hoque M."/>
            <person name="Li F.Q."/>
            <person name="Weber W.D."/>
            <person name="Chen J.J."/>
            <person name="Kim E.N."/>
            <person name="Kuo P.L."/>
            <person name="Visconti P.E."/>
            <person name="Takemaru K.I."/>
        </authorList>
    </citation>
    <scope>SUBUNIT</scope>
    <scope>INTERACTION WITH CIBAR1</scope>
    <scope>MUTAGENESIS OF SER-102 AND GLY-117</scope>
</reference>
<organism>
    <name type="scientific">Homo sapiens</name>
    <name type="common">Human</name>
    <dbReference type="NCBI Taxonomy" id="9606"/>
    <lineage>
        <taxon>Eukaryota</taxon>
        <taxon>Metazoa</taxon>
        <taxon>Chordata</taxon>
        <taxon>Craniata</taxon>
        <taxon>Vertebrata</taxon>
        <taxon>Euteleostomi</taxon>
        <taxon>Mammalia</taxon>
        <taxon>Eutheria</taxon>
        <taxon>Euarchontoglires</taxon>
        <taxon>Primates</taxon>
        <taxon>Haplorrhini</taxon>
        <taxon>Catarrhini</taxon>
        <taxon>Hominidae</taxon>
        <taxon>Homo</taxon>
    </lineage>
</organism>
<comment type="function">
    <text evidence="1">Plays a key role in the correct positioning of the annulus, a septin-based ring structure in the sperm flagellum, serving both as a physical barrier and a membrane diffusion barrier that separates the midpiece (MP) from the principal piece (PP) (By similarity). This positioning is essential for proper sperm motility and function (By similarity). CBY3 interacts with CIBAR1 to form a complex which localizes to the curved membrane region of the flagellar pocket (By similarity). By doing so, may provide stability and rigidity to the periannular membrane to prevent membrane deformation (By similarity). This function is crucial for halting annulus migration at the proximal end of the fibrous sheath-containing PP (By similarity).</text>
</comment>
<comment type="subunit">
    <text evidence="4">Homodimer (PubMed:38197861). Interacts with CIBAR1 (via BAR-like domain); both proteins form a ninefold symmetric structure at the flagellar base; are recruited to the annulus in a mutually dependent manner and regulate annulus positioning (PubMed:38197861).</text>
</comment>
<comment type="subcellular location">
    <subcellularLocation>
        <location evidence="1">Cell projection</location>
        <location evidence="1">Cilium</location>
        <location evidence="1">Flagellum</location>
    </subcellularLocation>
    <text evidence="1">Localizes to the annulus at the junction between the midpiece (MP) and principal piece (PP) of the sperm flagellum.</text>
</comment>
<comment type="miscellaneous">
    <text>'Chibby' is Japanese for 'small'; the gene was so named for the RNAi phenotype seen in flies.</text>
</comment>
<comment type="similarity">
    <text evidence="6">Belongs to the chibby family.</text>
</comment>
<gene>
    <name type="primary">CBY3</name>
</gene>
<sequence>MWASRDHLPEPDLGDAAPPGSPSSFWTSGLPRQERSTSRQRSRGSPSSTCVPYKVHALATFECSATSHASRLWQTLQQFWADHISRPFSPRRPPLRRMPSLSTFYLLDHNTRQAELGLAYGAPCMRLSNQAFVFRGGRWTTESQLARTRSPLLSRTAWGWKAQVQRSKSQVLLEENNYLKLQQELLIDMLTETMARMHLLEKQRNPEVIPTAAARAGQRKMRKRAGASAGVLMIQPCALDSQ</sequence>